<proteinExistence type="predicted"/>
<organism>
    <name type="scientific">Alcelaphine herpesvirus 1 (strain C500)</name>
    <name type="common">AlHV-1</name>
    <name type="synonym">Malignant catarrhal fever virus</name>
    <dbReference type="NCBI Taxonomy" id="654901"/>
    <lineage>
        <taxon>Viruses</taxon>
        <taxon>Duplodnaviria</taxon>
        <taxon>Heunggongvirae</taxon>
        <taxon>Peploviricota</taxon>
        <taxon>Herviviricetes</taxon>
        <taxon>Herpesvirales</taxon>
        <taxon>Orthoherpesviridae</taxon>
        <taxon>Gammaherpesvirinae</taxon>
        <taxon>Macavirus</taxon>
        <taxon>Macavirus alcelaphinegamma1</taxon>
    </lineage>
</organism>
<feature type="chain" id="PRO_0000405730" description="Uncharacterized gene 10 protein">
    <location>
        <begin position="1"/>
        <end position="404"/>
    </location>
</feature>
<reference key="1">
    <citation type="journal article" date="1997" name="J. Virol.">
        <title>Primary structure of the alcelaphine herpesvirus 1 genome.</title>
        <authorList>
            <person name="Ensser A."/>
            <person name="Pflanz R."/>
            <person name="Fleckenstein B."/>
        </authorList>
    </citation>
    <scope>NUCLEOTIDE SEQUENCE [LARGE SCALE GENOMIC DNA]</scope>
</reference>
<dbReference type="EMBL" id="AF005370">
    <property type="protein sequence ID" value="AAC58062.1"/>
    <property type="molecule type" value="Genomic_DNA"/>
</dbReference>
<dbReference type="PIR" id="T03110">
    <property type="entry name" value="T03110"/>
</dbReference>
<dbReference type="RefSeq" id="NP_065514.1">
    <property type="nucleotide sequence ID" value="NC_002531.1"/>
</dbReference>
<dbReference type="SMR" id="O36365"/>
<dbReference type="KEGG" id="vg:911750"/>
<dbReference type="Proteomes" id="UP000000941">
    <property type="component" value="Segment"/>
</dbReference>
<dbReference type="InterPro" id="IPR006882">
    <property type="entry name" value="Herpes_Orf11"/>
</dbReference>
<dbReference type="Pfam" id="PF04797">
    <property type="entry name" value="Herpes_ORF11"/>
    <property type="match status" value="1"/>
</dbReference>
<accession>O36365</accession>
<organismHost>
    <name type="scientific">Connochaetes taurinus</name>
    <name type="common">Blue wildebeest</name>
    <dbReference type="NCBI Taxonomy" id="9927"/>
</organismHost>
<keyword id="KW-1185">Reference proteome</keyword>
<name>VG10_ALHV1</name>
<sequence>MATVTAPMNMWSVRIVNGIFVLSNKKPLNLPAHLSQLNIPYSVHFIVDSLASFGLLSSLFSLDQVKQSCALLVQHKPNDQCTVLPTCVLDLEFDITVYVRSRQRVLQPGALQLALIFIKPVNGSEMAWDVRDPPETMVGQRLYENVSQGTVKALETPDHLLLTGEAIGRSDGTYDMLFKDQKIPCMVNYSNVFASYHSPNEEILPRALEITMLGQKTARLTFRPGHECPSATVSFRAEVRPILQPKVLFSHFLNWIRVNYDCQVMPLYPEQEEVVNAHDWVRFQVNNKFLVSTAVDTPLKVFICGLGQPSFLVADPGIWNPSSTCLLTLHNISNQPVKLRTCEPVAVGLLLYCNDAHLPSRDVCFCSETGRLEWRNCVVDSSQIFSWPHATQAKSLDSPKSMDS</sequence>
<gene>
    <name type="primary">10</name>
</gene>
<protein>
    <recommendedName>
        <fullName>Uncharacterized gene 10 protein</fullName>
    </recommendedName>
</protein>